<feature type="chain" id="PRO_1000050041" description="Probable protein kinase UbiB">
    <location>
        <begin position="1"/>
        <end position="546"/>
    </location>
</feature>
<feature type="transmembrane region" description="Helical" evidence="1">
    <location>
        <begin position="501"/>
        <end position="521"/>
    </location>
</feature>
<feature type="transmembrane region" description="Helical" evidence="1">
    <location>
        <begin position="522"/>
        <end position="542"/>
    </location>
</feature>
<feature type="domain" description="Protein kinase" evidence="1">
    <location>
        <begin position="124"/>
        <end position="502"/>
    </location>
</feature>
<feature type="active site" description="Proton acceptor" evidence="1">
    <location>
        <position position="288"/>
    </location>
</feature>
<feature type="binding site" evidence="1">
    <location>
        <begin position="130"/>
        <end position="138"/>
    </location>
    <ligand>
        <name>ATP</name>
        <dbReference type="ChEBI" id="CHEBI:30616"/>
    </ligand>
</feature>
<feature type="binding site" evidence="1">
    <location>
        <position position="153"/>
    </location>
    <ligand>
        <name>ATP</name>
        <dbReference type="ChEBI" id="CHEBI:30616"/>
    </ligand>
</feature>
<reference key="1">
    <citation type="journal article" date="2006" name="Proc. Natl. Acad. Sci. U.S.A.">
        <title>Identification of genes subject to positive selection in uropathogenic strains of Escherichia coli: a comparative genomics approach.</title>
        <authorList>
            <person name="Chen S.L."/>
            <person name="Hung C.-S."/>
            <person name="Xu J."/>
            <person name="Reigstad C.S."/>
            <person name="Magrini V."/>
            <person name="Sabo A."/>
            <person name="Blasiar D."/>
            <person name="Bieri T."/>
            <person name="Meyer R.R."/>
            <person name="Ozersky P."/>
            <person name="Armstrong J.R."/>
            <person name="Fulton R.S."/>
            <person name="Latreille J.P."/>
            <person name="Spieth J."/>
            <person name="Hooton T.M."/>
            <person name="Mardis E.R."/>
            <person name="Hultgren S.J."/>
            <person name="Gordon J.I."/>
        </authorList>
    </citation>
    <scope>NUCLEOTIDE SEQUENCE [LARGE SCALE GENOMIC DNA]</scope>
    <source>
        <strain>UTI89 / UPEC</strain>
    </source>
</reference>
<protein>
    <recommendedName>
        <fullName evidence="1">Probable protein kinase UbiB</fullName>
        <ecNumber evidence="1">2.7.-.-</ecNumber>
    </recommendedName>
    <alternativeName>
        <fullName evidence="1">Ubiquinone biosynthesis protein UbiB</fullName>
    </alternativeName>
</protein>
<gene>
    <name evidence="1" type="primary">ubiB</name>
    <name type="ordered locus">UTI89_C4422</name>
</gene>
<keyword id="KW-0067">ATP-binding</keyword>
<keyword id="KW-0997">Cell inner membrane</keyword>
<keyword id="KW-1003">Cell membrane</keyword>
<keyword id="KW-0418">Kinase</keyword>
<keyword id="KW-0472">Membrane</keyword>
<keyword id="KW-0547">Nucleotide-binding</keyword>
<keyword id="KW-0808">Transferase</keyword>
<keyword id="KW-0812">Transmembrane</keyword>
<keyword id="KW-1133">Transmembrane helix</keyword>
<keyword id="KW-0831">Ubiquinone biosynthesis</keyword>
<organism>
    <name type="scientific">Escherichia coli (strain UTI89 / UPEC)</name>
    <dbReference type="NCBI Taxonomy" id="364106"/>
    <lineage>
        <taxon>Bacteria</taxon>
        <taxon>Pseudomonadati</taxon>
        <taxon>Pseudomonadota</taxon>
        <taxon>Gammaproteobacteria</taxon>
        <taxon>Enterobacterales</taxon>
        <taxon>Enterobacteriaceae</taxon>
        <taxon>Escherichia</taxon>
    </lineage>
</organism>
<comment type="function">
    <text evidence="1">Is probably a protein kinase regulator of UbiI activity which is involved in aerobic coenzyme Q (ubiquinone) biosynthesis.</text>
</comment>
<comment type="pathway">
    <text>Cofactor biosynthesis; ubiquinone biosynthesis [regulation].</text>
</comment>
<comment type="subcellular location">
    <subcellularLocation>
        <location evidence="1">Cell inner membrane</location>
        <topology evidence="1">Multi-pass membrane protein</topology>
    </subcellularLocation>
</comment>
<comment type="similarity">
    <text evidence="1">Belongs to the ABC1 family. UbiB subfamily.</text>
</comment>
<sequence length="546" mass="63217">MTPGEVRRLYFIIRTFLSYGLDELIPKMRITLPLRLWRYSLFWMPNRHKDKPLGERLRLALQELGPVWIKFGQMLSTRRDLFPPHIADQLALLQDKVAPFDGKLAKQQIEAAMGGLPVEAWFDDFEIKPLASASIAQVHTARLKSNGKEVVIKVIRPDILPVIKADLKLIYRLARWVPRLLPDGRRLRPTEVVREYEKTLIDELNLLRESANAIQLRRNFEDSPMLYIPEVYPDYCSEGMMVMERIYGIPVSDVATLEKNGTNMKLLAERGVQVFFTQVFRDSFFHADMHPGNIFVSYEHPENPKYIGIDCGIVGSLNKEDKRYLAENFIAFFNRDYRKVAELHVDSGWVPPDTNVEEFEFAIRTVCEPIFEKPLAEISFGHVLLNLFNTARRFNMEVQPQLVLLQKTLLYVEGVGRQLYPQLDLWKTAKPFLESWIKDQVGIPALVRAFKEKAPFWVEKMPELPELVYDSLRQGKYLQHSVDKIARELQSNHVRQGQSRYFLGIGATLVLSGTFLLVSRPEWGLMPGWLMAGGLIAWFVGWRKTR</sequence>
<dbReference type="EC" id="2.7.-.-" evidence="1"/>
<dbReference type="EMBL" id="CP000243">
    <property type="protein sequence ID" value="ABE09839.1"/>
    <property type="molecule type" value="Genomic_DNA"/>
</dbReference>
<dbReference type="RefSeq" id="WP_000187545.1">
    <property type="nucleotide sequence ID" value="NZ_CP064825.1"/>
</dbReference>
<dbReference type="SMR" id="Q1R475"/>
<dbReference type="KEGG" id="eci:UTI89_C4422"/>
<dbReference type="HOGENOM" id="CLU_006533_0_0_6"/>
<dbReference type="UniPathway" id="UPA00232"/>
<dbReference type="Proteomes" id="UP000001952">
    <property type="component" value="Chromosome"/>
</dbReference>
<dbReference type="GO" id="GO:0005886">
    <property type="term" value="C:plasma membrane"/>
    <property type="evidence" value="ECO:0007669"/>
    <property type="project" value="UniProtKB-SubCell"/>
</dbReference>
<dbReference type="GO" id="GO:0005524">
    <property type="term" value="F:ATP binding"/>
    <property type="evidence" value="ECO:0007669"/>
    <property type="project" value="UniProtKB-KW"/>
</dbReference>
<dbReference type="GO" id="GO:0004672">
    <property type="term" value="F:protein kinase activity"/>
    <property type="evidence" value="ECO:0007669"/>
    <property type="project" value="UniProtKB-UniRule"/>
</dbReference>
<dbReference type="GO" id="GO:0010795">
    <property type="term" value="P:regulation of ubiquinone biosynthetic process"/>
    <property type="evidence" value="ECO:0007669"/>
    <property type="project" value="UniProtKB-UniRule"/>
</dbReference>
<dbReference type="GO" id="GO:0006744">
    <property type="term" value="P:ubiquinone biosynthetic process"/>
    <property type="evidence" value="ECO:0007669"/>
    <property type="project" value="UniProtKB-UniPathway"/>
</dbReference>
<dbReference type="CDD" id="cd13972">
    <property type="entry name" value="UbiB"/>
    <property type="match status" value="1"/>
</dbReference>
<dbReference type="HAMAP" id="MF_00414">
    <property type="entry name" value="UbiB"/>
    <property type="match status" value="1"/>
</dbReference>
<dbReference type="InterPro" id="IPR004147">
    <property type="entry name" value="ABC1_dom"/>
</dbReference>
<dbReference type="InterPro" id="IPR011009">
    <property type="entry name" value="Kinase-like_dom_sf"/>
</dbReference>
<dbReference type="InterPro" id="IPR010232">
    <property type="entry name" value="UbiB"/>
</dbReference>
<dbReference type="InterPro" id="IPR045308">
    <property type="entry name" value="UbiB_bact"/>
</dbReference>
<dbReference type="InterPro" id="IPR050154">
    <property type="entry name" value="UbiB_kinase"/>
</dbReference>
<dbReference type="NCBIfam" id="NF003404">
    <property type="entry name" value="PRK04750.1"/>
    <property type="match status" value="1"/>
</dbReference>
<dbReference type="NCBIfam" id="TIGR01982">
    <property type="entry name" value="UbiB"/>
    <property type="match status" value="1"/>
</dbReference>
<dbReference type="PANTHER" id="PTHR10566">
    <property type="entry name" value="CHAPERONE-ACTIVITY OF BC1 COMPLEX CABC1 -RELATED"/>
    <property type="match status" value="1"/>
</dbReference>
<dbReference type="PANTHER" id="PTHR10566:SF113">
    <property type="entry name" value="PROTEIN ACTIVITY OF BC1 COMPLEX KINASE 7, CHLOROPLASTIC"/>
    <property type="match status" value="1"/>
</dbReference>
<dbReference type="Pfam" id="PF03109">
    <property type="entry name" value="ABC1"/>
    <property type="match status" value="1"/>
</dbReference>
<dbReference type="SUPFAM" id="SSF56112">
    <property type="entry name" value="Protein kinase-like (PK-like)"/>
    <property type="match status" value="1"/>
</dbReference>
<proteinExistence type="inferred from homology"/>
<name>UBIB_ECOUT</name>
<evidence type="ECO:0000255" key="1">
    <source>
        <dbReference type="HAMAP-Rule" id="MF_00414"/>
    </source>
</evidence>
<accession>Q1R475</accession>